<reference key="1">
    <citation type="journal article" date="2018" name="ACS Chem. Biol.">
        <title>Characterization of a prenyltransferase for iso-A82775C biosynthesis and generation of new congeners of chloropestolides.</title>
        <authorList>
            <person name="Pan Y."/>
            <person name="Liu L."/>
            <person name="Guan F."/>
            <person name="Li E."/>
            <person name="Jin J."/>
            <person name="Li J."/>
            <person name="Che Y."/>
            <person name="Liu G."/>
        </authorList>
    </citation>
    <scope>NUCLEOTIDE SEQUENCE [GENOMIC DNA]</scope>
    <scope>FUNCTION</scope>
    <scope>DISRUPTION PHENOTYPE</scope>
    <scope>INDUCTION</scope>
    <source>
        <strain>W106-1 / CGMCC3.15140</strain>
    </source>
</reference>
<reference key="2">
    <citation type="journal article" date="2015" name="BMC Genomics">
        <title>Genomic and transcriptomic analysis of the endophytic fungus Pestalotiopsis fici reveals its lifestyle and high potential for synthesis of natural products.</title>
        <authorList>
            <person name="Wang X."/>
            <person name="Zhang X."/>
            <person name="Liu L."/>
            <person name="Xiang M."/>
            <person name="Wang W."/>
            <person name="Sun X."/>
            <person name="Che Y."/>
            <person name="Guo L."/>
            <person name="Liu G."/>
            <person name="Guo L."/>
            <person name="Wang C."/>
            <person name="Yin W.B."/>
            <person name="Stadler M."/>
            <person name="Zhang X."/>
            <person name="Liu X."/>
        </authorList>
    </citation>
    <scope>NUCLEOTIDE SEQUENCE [LARGE SCALE GENOMIC DNA]</scope>
    <source>
        <strain>W106-1 / CGMCC3.15140</strain>
    </source>
</reference>
<evidence type="ECO:0000269" key="1">
    <source>
    </source>
</evidence>
<evidence type="ECO:0000303" key="2">
    <source>
    </source>
</evidence>
<evidence type="ECO:0000305" key="3">
    <source>
    </source>
</evidence>
<dbReference type="EMBL" id="KU963195">
    <property type="protein sequence ID" value="APC93981.1"/>
    <property type="molecule type" value="Genomic_DNA"/>
</dbReference>
<dbReference type="EMBL" id="KI912110">
    <property type="protein sequence ID" value="ETS86013.1"/>
    <property type="molecule type" value="Genomic_DNA"/>
</dbReference>
<dbReference type="RefSeq" id="XP_007830810.1">
    <property type="nucleotide sequence ID" value="XM_007832619.1"/>
</dbReference>
<dbReference type="GeneID" id="19269051"/>
<dbReference type="KEGG" id="pfy:PFICI_04038"/>
<dbReference type="eggNOG" id="ENOG502TB2V">
    <property type="taxonomic scope" value="Eukaryota"/>
</dbReference>
<dbReference type="HOGENOM" id="CLU_075844_0_0_1"/>
<dbReference type="InParanoid" id="A0A1J0KKC6"/>
<dbReference type="OMA" id="IADSCES"/>
<dbReference type="OrthoDB" id="5148295at2759"/>
<dbReference type="Proteomes" id="UP000030651">
    <property type="component" value="Unassembled WGS sequence"/>
</dbReference>
<keyword id="KW-1185">Reference proteome</keyword>
<sequence>MASTWFTNIEALSYSVVEFIPYVGTVYSFKRAQLAYQERDWPRHWQSVANFLESAIRDVILFAGVEEVAGVVILHTIAESFTDKLVELYYEHNKDEADRVRQPRIEIPQPQALDPSNELVVVAGRTKGAHGEKVFHGKAKGVHRFHGARFAGTIKHSKYAPSGEYIQLHIPQGLFDGARVTFMWKWTKDEWGTENRPEVIVGTISLYIGDDKLTWFKFTKRQGAGWRPGEGSDFNCKVASLNLIIASTTVGDESLKIDLERI</sequence>
<gene>
    <name evidence="2" type="primary">iacB</name>
    <name type="ORF">PFICI_04038</name>
</gene>
<accession>A0A1J0KKC6</accession>
<accession>W3XIX0</accession>
<proteinExistence type="evidence at protein level"/>
<organism>
    <name type="scientific">Pestalotiopsis fici (strain W106-1 / CGMCC3.15140)</name>
    <dbReference type="NCBI Taxonomy" id="1229662"/>
    <lineage>
        <taxon>Eukaryota</taxon>
        <taxon>Fungi</taxon>
        <taxon>Dikarya</taxon>
        <taxon>Ascomycota</taxon>
        <taxon>Pezizomycotina</taxon>
        <taxon>Sordariomycetes</taxon>
        <taxon>Xylariomycetidae</taxon>
        <taxon>Amphisphaeriales</taxon>
        <taxon>Sporocadaceae</taxon>
        <taxon>Pestalotiopsis</taxon>
    </lineage>
</organism>
<name>IACB_PESFW</name>
<protein>
    <recommendedName>
        <fullName evidence="2">Iso-A82775C biosynthesis cluster protein B</fullName>
    </recommendedName>
</protein>
<feature type="chain" id="PRO_0000451383" description="Iso-A82775C biosynthesis cluster protein B">
    <location>
        <begin position="1"/>
        <end position="262"/>
    </location>
</feature>
<comment type="function">
    <text evidence="1 3">Part of the gene cluster that mediates the biosynthesis of iso-A82775C, a enylepoxycyclohexane and biosynthetic precursor of the chloropestolide anticancer natural products (PubMed:29384350). Within the cluster, the prenyltransferase iacE prenylates siccayne to generate pestalodiol E, using dimethylallyl diphosphate (DMAPP) as cosubstrate (PubMed:29384350). The probable oxidoreductase iacF is then involved in the epoxidation of pestalodiol F to pestalodiol F, which is further converted to pestalofone A by the short-chain dehydrogenase/reductase iacG (PubMed:29384350). Iso-A82775C is subsequently generated from pestalofone A by the short-chain dehydrogenase/reductase iacC (PubMed:29384350). Iso-A82775C is further condensed with maldoxin via a Diels-Alder reaction to produce the anticancer natural products chloropestolides A to E (Probable).</text>
</comment>
<comment type="induction">
    <text evidence="1">Expression is co-regulated with the other genes from the iso-A82775C biosynthesis cluster and probably controlled by the cluster-specific transcription factors iacI and iacK.</text>
</comment>
<comment type="disruption phenotype">
    <text evidence="1">Does not affect the production of iso-A82775C.</text>
</comment>
<comment type="biotechnology">
    <text evidence="1">Iso-A82775C is a precursor for the biosynthesis of the anticancer natural products chloropestolides A to E via a Diesls-Alder reaction with maldoxin (PubMed:29384350). In the absence of the prenyltransferase iacE, siccayne accumulates instead of iso-A82775C and can also be condensed with maldoxin to produce chloropestolides H to K, which show also antibacterial and anticancer properties (PubMed:29384350).</text>
</comment>